<reference key="1">
    <citation type="journal article" date="1998" name="Nature">
        <title>The genome sequence of Rickettsia prowazekii and the origin of mitochondria.</title>
        <authorList>
            <person name="Andersson S.G.E."/>
            <person name="Zomorodipour A."/>
            <person name="Andersson J.O."/>
            <person name="Sicheritz-Ponten T."/>
            <person name="Alsmark U.C.M."/>
            <person name="Podowski R.M."/>
            <person name="Naeslund A.K."/>
            <person name="Eriksson A.-S."/>
            <person name="Winkler H.H."/>
            <person name="Kurland C.G."/>
        </authorList>
    </citation>
    <scope>NUCLEOTIDE SEQUENCE [LARGE SCALE GENOMIC DNA]</scope>
    <source>
        <strain>Madrid E</strain>
    </source>
</reference>
<sequence>MLLYRKYFIKNILPLLIIVTFSVTSIVWITQILKLLYLFDKGIKVIDFFNLVVLVLPTLLFILLPIITVIAVLYIYNNLKVERQLIILQTSGVNNIQLALPALYVALTIMLLAYYISSTILPLSHINLKSRLNFIKNNYISSMIEEKTFNKITKNITVFIDKKLTGNIMNGIIIFDNRNADNPSVVFAGSGTLNIYGNNPIFELNKGLRQEYDANGNLTQLTFDSLMIKLQNNSSLTSQRTQNNKEANEYYISELLTPSHDLVITKKIKLIAEAHQRIIWPLYNFVLPCLALAVFLRYPYSKKTTFMPVLFSALTVLFVTAIHFILQNFASKNLDFIFACYFNLLVALTIGLYLLVHKRI</sequence>
<dbReference type="EMBL" id="AJ235273">
    <property type="protein sequence ID" value="CAA15295.1"/>
    <property type="molecule type" value="Genomic_DNA"/>
</dbReference>
<dbReference type="PIR" id="G71649">
    <property type="entry name" value="G71649"/>
</dbReference>
<dbReference type="RefSeq" id="NP_221219.1">
    <property type="nucleotide sequence ID" value="NC_000963.1"/>
</dbReference>
<dbReference type="RefSeq" id="WP_004596741.1">
    <property type="nucleotide sequence ID" value="NC_000963.1"/>
</dbReference>
<dbReference type="SMR" id="Q9ZC95"/>
<dbReference type="STRING" id="272947.gene:17555940"/>
<dbReference type="EnsemblBacteria" id="CAA15295">
    <property type="protein sequence ID" value="CAA15295"/>
    <property type="gene ID" value="CAA15295"/>
</dbReference>
<dbReference type="KEGG" id="rpr:RP871"/>
<dbReference type="PATRIC" id="fig|272947.5.peg.911"/>
<dbReference type="eggNOG" id="COG0795">
    <property type="taxonomic scope" value="Bacteria"/>
</dbReference>
<dbReference type="HOGENOM" id="CLU_028799_7_1_5"/>
<dbReference type="OrthoDB" id="8477889at2"/>
<dbReference type="Proteomes" id="UP000002480">
    <property type="component" value="Chromosome"/>
</dbReference>
<dbReference type="GO" id="GO:0043190">
    <property type="term" value="C:ATP-binding cassette (ABC) transporter complex"/>
    <property type="evidence" value="ECO:0007669"/>
    <property type="project" value="TreeGrafter"/>
</dbReference>
<dbReference type="GO" id="GO:0015920">
    <property type="term" value="P:lipopolysaccharide transport"/>
    <property type="evidence" value="ECO:0007669"/>
    <property type="project" value="TreeGrafter"/>
</dbReference>
<dbReference type="InterPro" id="IPR005495">
    <property type="entry name" value="LptG/LptF_permease"/>
</dbReference>
<dbReference type="PANTHER" id="PTHR33529">
    <property type="entry name" value="SLR0882 PROTEIN-RELATED"/>
    <property type="match status" value="1"/>
</dbReference>
<dbReference type="PANTHER" id="PTHR33529:SF6">
    <property type="entry name" value="YJGP_YJGQ FAMILY PERMEASE"/>
    <property type="match status" value="1"/>
</dbReference>
<dbReference type="Pfam" id="PF03739">
    <property type="entry name" value="LptF_LptG"/>
    <property type="match status" value="1"/>
</dbReference>
<proteinExistence type="predicted"/>
<gene>
    <name type="ordered locus">RP871</name>
</gene>
<evidence type="ECO:0000255" key="1"/>
<evidence type="ECO:0000305" key="2"/>
<protein>
    <recommendedName>
        <fullName>Uncharacterized protein RP871</fullName>
    </recommendedName>
</protein>
<keyword id="KW-1003">Cell membrane</keyword>
<keyword id="KW-0472">Membrane</keyword>
<keyword id="KW-1185">Reference proteome</keyword>
<keyword id="KW-0812">Transmembrane</keyword>
<keyword id="KW-1133">Transmembrane helix</keyword>
<comment type="subcellular location">
    <subcellularLocation>
        <location evidence="2">Cell membrane</location>
        <topology evidence="2">Multi-pass membrane protein</topology>
    </subcellularLocation>
</comment>
<accession>Q9ZC95</accession>
<organism>
    <name type="scientific">Rickettsia prowazekii (strain Madrid E)</name>
    <dbReference type="NCBI Taxonomy" id="272947"/>
    <lineage>
        <taxon>Bacteria</taxon>
        <taxon>Pseudomonadati</taxon>
        <taxon>Pseudomonadota</taxon>
        <taxon>Alphaproteobacteria</taxon>
        <taxon>Rickettsiales</taxon>
        <taxon>Rickettsiaceae</taxon>
        <taxon>Rickettsieae</taxon>
        <taxon>Rickettsia</taxon>
        <taxon>typhus group</taxon>
    </lineage>
</organism>
<name>Y871_RICPR</name>
<feature type="chain" id="PRO_0000101427" description="Uncharacterized protein RP871">
    <location>
        <begin position="1"/>
        <end position="360"/>
    </location>
</feature>
<feature type="transmembrane region" description="Helical" evidence="1">
    <location>
        <begin position="12"/>
        <end position="32"/>
    </location>
</feature>
<feature type="transmembrane region" description="Helical" evidence="1">
    <location>
        <begin position="52"/>
        <end position="72"/>
    </location>
</feature>
<feature type="transmembrane region" description="Helical" evidence="1">
    <location>
        <begin position="96"/>
        <end position="116"/>
    </location>
</feature>
<feature type="transmembrane region" description="Helical" evidence="1">
    <location>
        <begin position="278"/>
        <end position="298"/>
    </location>
</feature>
<feature type="transmembrane region" description="Helical" evidence="1">
    <location>
        <begin position="306"/>
        <end position="326"/>
    </location>
</feature>
<feature type="transmembrane region" description="Helical" evidence="1">
    <location>
        <begin position="336"/>
        <end position="356"/>
    </location>
</feature>